<proteinExistence type="inferred from homology"/>
<feature type="chain" id="PRO_1000148932" description="Imidazole glycerol phosphate synthase subunit HisF">
    <location>
        <begin position="1"/>
        <end position="261"/>
    </location>
</feature>
<feature type="active site" evidence="1">
    <location>
        <position position="16"/>
    </location>
</feature>
<feature type="active site" evidence="1">
    <location>
        <position position="135"/>
    </location>
</feature>
<reference key="1">
    <citation type="journal article" date="2009" name="Nat. Genet.">
        <title>Comparative genomic and phylogeographic analysis of Mycobacterium leprae.</title>
        <authorList>
            <person name="Monot M."/>
            <person name="Honore N."/>
            <person name="Garnier T."/>
            <person name="Zidane N."/>
            <person name="Sherafi D."/>
            <person name="Paniz-Mondolfi A."/>
            <person name="Matsuoka M."/>
            <person name="Taylor G.M."/>
            <person name="Donoghue H.D."/>
            <person name="Bouwman A."/>
            <person name="Mays S."/>
            <person name="Watson C."/>
            <person name="Lockwood D."/>
            <person name="Khamispour A."/>
            <person name="Dowlati Y."/>
            <person name="Jianping S."/>
            <person name="Rea T.H."/>
            <person name="Vera-Cabrera L."/>
            <person name="Stefani M.M."/>
            <person name="Banu S."/>
            <person name="Macdonald M."/>
            <person name="Sapkota B.R."/>
            <person name="Spencer J.S."/>
            <person name="Thomas J."/>
            <person name="Harshman K."/>
            <person name="Singh P."/>
            <person name="Busso P."/>
            <person name="Gattiker A."/>
            <person name="Rougemont J."/>
            <person name="Brennan P.J."/>
            <person name="Cole S.T."/>
        </authorList>
    </citation>
    <scope>NUCLEOTIDE SEQUENCE [LARGE SCALE GENOMIC DNA]</scope>
    <source>
        <strain>Br4923</strain>
    </source>
</reference>
<protein>
    <recommendedName>
        <fullName evidence="1">Imidazole glycerol phosphate synthase subunit HisF</fullName>
        <ecNumber evidence="1">4.3.2.10</ecNumber>
    </recommendedName>
    <alternativeName>
        <fullName evidence="1">IGP synthase cyclase subunit</fullName>
    </alternativeName>
    <alternativeName>
        <fullName evidence="1">IGP synthase subunit HisF</fullName>
    </alternativeName>
    <alternativeName>
        <fullName evidence="1">ImGP synthase subunit HisF</fullName>
        <shortName evidence="1">IGPS subunit HisF</shortName>
    </alternativeName>
</protein>
<sequence>MYSGNGLAVRVIPCLDVYCGRVVKGVNFKNLRDAGDLVELAAAYDAEGADELAFLDVTASSSGRATMLEVVRCTAEQVFIPLMVGGGVRTVADVDVLLRAGADKVAVNTAAIARPELLADMAGQFGSQCIVLSVDARTVPTGSARTPSGWEATTHGGYRGTGIDAVEWAARGADLGVGEILLNSMDADGTKAGFDLAMLRAVRAAVTVPVIASGGAGAIEHFVPAVTAGADAVLAASVFHFRELTIGQVKDAMAAAGIAVR</sequence>
<comment type="function">
    <text evidence="1">IGPS catalyzes the conversion of PRFAR and glutamine to IGP, AICAR and glutamate. The HisF subunit catalyzes the cyclization activity that produces IGP and AICAR from PRFAR using the ammonia provided by the HisH subunit.</text>
</comment>
<comment type="catalytic activity">
    <reaction evidence="1">
        <text>5-[(5-phospho-1-deoxy-D-ribulos-1-ylimino)methylamino]-1-(5-phospho-beta-D-ribosyl)imidazole-4-carboxamide + L-glutamine = D-erythro-1-(imidazol-4-yl)glycerol 3-phosphate + 5-amino-1-(5-phospho-beta-D-ribosyl)imidazole-4-carboxamide + L-glutamate + H(+)</text>
        <dbReference type="Rhea" id="RHEA:24793"/>
        <dbReference type="ChEBI" id="CHEBI:15378"/>
        <dbReference type="ChEBI" id="CHEBI:29985"/>
        <dbReference type="ChEBI" id="CHEBI:58278"/>
        <dbReference type="ChEBI" id="CHEBI:58359"/>
        <dbReference type="ChEBI" id="CHEBI:58475"/>
        <dbReference type="ChEBI" id="CHEBI:58525"/>
        <dbReference type="EC" id="4.3.2.10"/>
    </reaction>
</comment>
<comment type="pathway">
    <text evidence="1">Amino-acid biosynthesis; L-histidine biosynthesis; L-histidine from 5-phospho-alpha-D-ribose 1-diphosphate: step 5/9.</text>
</comment>
<comment type="subunit">
    <text evidence="1">Heterodimer of HisH and HisF.</text>
</comment>
<comment type="subcellular location">
    <subcellularLocation>
        <location evidence="1">Cytoplasm</location>
    </subcellularLocation>
</comment>
<comment type="similarity">
    <text evidence="1">Belongs to the HisA/HisF family.</text>
</comment>
<name>HIS6_MYCLB</name>
<accession>B8ZRB4</accession>
<keyword id="KW-0028">Amino-acid biosynthesis</keyword>
<keyword id="KW-0963">Cytoplasm</keyword>
<keyword id="KW-0368">Histidine biosynthesis</keyword>
<keyword id="KW-0456">Lyase</keyword>
<evidence type="ECO:0000255" key="1">
    <source>
        <dbReference type="HAMAP-Rule" id="MF_01013"/>
    </source>
</evidence>
<gene>
    <name evidence="1" type="primary">hisF</name>
    <name type="ordered locus">MLBr01263</name>
</gene>
<organism>
    <name type="scientific">Mycobacterium leprae (strain Br4923)</name>
    <dbReference type="NCBI Taxonomy" id="561304"/>
    <lineage>
        <taxon>Bacteria</taxon>
        <taxon>Bacillati</taxon>
        <taxon>Actinomycetota</taxon>
        <taxon>Actinomycetes</taxon>
        <taxon>Mycobacteriales</taxon>
        <taxon>Mycobacteriaceae</taxon>
        <taxon>Mycobacterium</taxon>
    </lineage>
</organism>
<dbReference type="EC" id="4.3.2.10" evidence="1"/>
<dbReference type="EMBL" id="FM211192">
    <property type="protein sequence ID" value="CAR71358.1"/>
    <property type="molecule type" value="Genomic_DNA"/>
</dbReference>
<dbReference type="SMR" id="B8ZRB4"/>
<dbReference type="KEGG" id="mlb:MLBr01263"/>
<dbReference type="HOGENOM" id="CLU_048577_4_0_11"/>
<dbReference type="UniPathway" id="UPA00031">
    <property type="reaction ID" value="UER00010"/>
</dbReference>
<dbReference type="Proteomes" id="UP000006900">
    <property type="component" value="Chromosome"/>
</dbReference>
<dbReference type="GO" id="GO:0005737">
    <property type="term" value="C:cytoplasm"/>
    <property type="evidence" value="ECO:0007669"/>
    <property type="project" value="UniProtKB-SubCell"/>
</dbReference>
<dbReference type="GO" id="GO:0000107">
    <property type="term" value="F:imidazoleglycerol-phosphate synthase activity"/>
    <property type="evidence" value="ECO:0007669"/>
    <property type="project" value="UniProtKB-UniRule"/>
</dbReference>
<dbReference type="GO" id="GO:0016829">
    <property type="term" value="F:lyase activity"/>
    <property type="evidence" value="ECO:0007669"/>
    <property type="project" value="UniProtKB-KW"/>
</dbReference>
<dbReference type="GO" id="GO:0000105">
    <property type="term" value="P:L-histidine biosynthetic process"/>
    <property type="evidence" value="ECO:0007669"/>
    <property type="project" value="UniProtKB-UniRule"/>
</dbReference>
<dbReference type="CDD" id="cd04731">
    <property type="entry name" value="HisF"/>
    <property type="match status" value="1"/>
</dbReference>
<dbReference type="FunFam" id="3.20.20.70:FF:000006">
    <property type="entry name" value="Imidazole glycerol phosphate synthase subunit HisF"/>
    <property type="match status" value="1"/>
</dbReference>
<dbReference type="Gene3D" id="3.20.20.70">
    <property type="entry name" value="Aldolase class I"/>
    <property type="match status" value="1"/>
</dbReference>
<dbReference type="HAMAP" id="MF_01013">
    <property type="entry name" value="HisF"/>
    <property type="match status" value="1"/>
</dbReference>
<dbReference type="InterPro" id="IPR013785">
    <property type="entry name" value="Aldolase_TIM"/>
</dbReference>
<dbReference type="InterPro" id="IPR006062">
    <property type="entry name" value="His_biosynth"/>
</dbReference>
<dbReference type="InterPro" id="IPR004651">
    <property type="entry name" value="HisF"/>
</dbReference>
<dbReference type="InterPro" id="IPR050064">
    <property type="entry name" value="IGPS_HisA/HisF"/>
</dbReference>
<dbReference type="InterPro" id="IPR011060">
    <property type="entry name" value="RibuloseP-bd_barrel"/>
</dbReference>
<dbReference type="NCBIfam" id="TIGR00735">
    <property type="entry name" value="hisF"/>
    <property type="match status" value="1"/>
</dbReference>
<dbReference type="PANTHER" id="PTHR21235:SF2">
    <property type="entry name" value="IMIDAZOLE GLYCEROL PHOSPHATE SYNTHASE HISHF"/>
    <property type="match status" value="1"/>
</dbReference>
<dbReference type="PANTHER" id="PTHR21235">
    <property type="entry name" value="IMIDAZOLE GLYCEROL PHOSPHATE SYNTHASE SUBUNIT HISF/H IGP SYNTHASE SUBUNIT HISF/H"/>
    <property type="match status" value="1"/>
</dbReference>
<dbReference type="Pfam" id="PF00977">
    <property type="entry name" value="His_biosynth"/>
    <property type="match status" value="1"/>
</dbReference>
<dbReference type="SUPFAM" id="SSF51366">
    <property type="entry name" value="Ribulose-phoshate binding barrel"/>
    <property type="match status" value="1"/>
</dbReference>